<evidence type="ECO:0000255" key="1">
    <source>
        <dbReference type="HAMAP-Rule" id="MF_01301"/>
    </source>
</evidence>
<protein>
    <recommendedName>
        <fullName evidence="1">Maltoporin 1</fullName>
    </recommendedName>
    <alternativeName>
        <fullName evidence="1">Maltose-inducible porin 1</fullName>
    </alternativeName>
</protein>
<organism>
    <name type="scientific">Yersinia pseudotuberculosis serotype I (strain IP32953)</name>
    <dbReference type="NCBI Taxonomy" id="273123"/>
    <lineage>
        <taxon>Bacteria</taxon>
        <taxon>Pseudomonadati</taxon>
        <taxon>Pseudomonadota</taxon>
        <taxon>Gammaproteobacteria</taxon>
        <taxon>Enterobacterales</taxon>
        <taxon>Yersiniaceae</taxon>
        <taxon>Yersinia</taxon>
    </lineage>
</organism>
<sequence>MITLRKLPIALAVAAGVLSTQAMAVDFHGYARSGIGWTASGGEQQCFQTTGAQSKYRLGNECETYAELKLGQELWKEGDKSFYLDTNVAYSVSQRDDWESTDPAFREANVQGKNLIESLPGSTIWAGKRFYQRHDVHMIDFYYWDISGPGAGLETIDLGFGKLSVAATRNSESGGSSAWIDNQRENAKYTINNVYDVRLAGLETNPGGSLELGVDYGRADTQEGYSLAPNASKDGVMLTAEHTQSLMGGFNKFVVQYATDSMTSYNTGHSQGTSVNNNGHLLRVIDHGAINLAEKWDMMYVALYQDIDLDNNNGNTWYSVGVRPMYKWTPIMSTLLEAGYDNVKSQHTGERNGQYKLTLAQQWQAGDSIWSRPAIRVFATYANWDEKWGYSDTTGVAQDGTIGTNSRGKNNEVTFGAQFEAWW</sequence>
<keyword id="KW-0998">Cell outer membrane</keyword>
<keyword id="KW-0406">Ion transport</keyword>
<keyword id="KW-0472">Membrane</keyword>
<keyword id="KW-0626">Porin</keyword>
<keyword id="KW-0732">Signal</keyword>
<keyword id="KW-0762">Sugar transport</keyword>
<keyword id="KW-0812">Transmembrane</keyword>
<keyword id="KW-1134">Transmembrane beta strand</keyword>
<keyword id="KW-0813">Transport</keyword>
<name>LAMB1_YERPS</name>
<accession>Q664X6</accession>
<proteinExistence type="inferred from homology"/>
<comment type="function">
    <text evidence="1">Involved in the transport of maltose and maltodextrins.</text>
</comment>
<comment type="catalytic activity">
    <reaction evidence="1">
        <text>beta-maltose(in) = beta-maltose(out)</text>
        <dbReference type="Rhea" id="RHEA:29731"/>
        <dbReference type="ChEBI" id="CHEBI:18147"/>
    </reaction>
</comment>
<comment type="subunit">
    <text evidence="1">Homotrimer formed of three 18-stranded antiparallel beta-barrels, containing three independent channels.</text>
</comment>
<comment type="subcellular location">
    <subcellularLocation>
        <location evidence="1">Cell outer membrane</location>
        <topology evidence="1">Multi-pass membrane protein</topology>
    </subcellularLocation>
</comment>
<comment type="induction">
    <text evidence="1">By maltose.</text>
</comment>
<comment type="similarity">
    <text evidence="1">Belongs to the porin LamB (TC 1.B.3) family.</text>
</comment>
<dbReference type="EMBL" id="BX936398">
    <property type="protein sequence ID" value="CAH22880.1"/>
    <property type="molecule type" value="Genomic_DNA"/>
</dbReference>
<dbReference type="RefSeq" id="WP_002212092.1">
    <property type="nucleotide sequence ID" value="NZ_CP009712.1"/>
</dbReference>
<dbReference type="SMR" id="Q664X6"/>
<dbReference type="KEGG" id="ypo:BZ17_2956"/>
<dbReference type="KEGG" id="yps:YPTB3642"/>
<dbReference type="PATRIC" id="fig|273123.14.peg.3090"/>
<dbReference type="Proteomes" id="UP000001011">
    <property type="component" value="Chromosome"/>
</dbReference>
<dbReference type="GO" id="GO:0009279">
    <property type="term" value="C:cell outer membrane"/>
    <property type="evidence" value="ECO:0007669"/>
    <property type="project" value="UniProtKB-SubCell"/>
</dbReference>
<dbReference type="GO" id="GO:0046930">
    <property type="term" value="C:pore complex"/>
    <property type="evidence" value="ECO:0007669"/>
    <property type="project" value="UniProtKB-KW"/>
</dbReference>
<dbReference type="GO" id="GO:0042958">
    <property type="term" value="F:maltodextrin transmembrane transporter activity"/>
    <property type="evidence" value="ECO:0007669"/>
    <property type="project" value="InterPro"/>
</dbReference>
<dbReference type="GO" id="GO:0015481">
    <property type="term" value="F:maltose transporting porin activity"/>
    <property type="evidence" value="ECO:0007669"/>
    <property type="project" value="InterPro"/>
</dbReference>
<dbReference type="GO" id="GO:0006811">
    <property type="term" value="P:monoatomic ion transport"/>
    <property type="evidence" value="ECO:0007669"/>
    <property type="project" value="UniProtKB-KW"/>
</dbReference>
<dbReference type="CDD" id="cd01346">
    <property type="entry name" value="Maltoporin-like"/>
    <property type="match status" value="1"/>
</dbReference>
<dbReference type="FunFam" id="2.40.170.10:FF:000001">
    <property type="entry name" value="Maltoporin"/>
    <property type="match status" value="1"/>
</dbReference>
<dbReference type="Gene3D" id="2.40.170.10">
    <property type="entry name" value="Porin, LamB type"/>
    <property type="match status" value="1"/>
</dbReference>
<dbReference type="HAMAP" id="MF_01301">
    <property type="entry name" value="LamB"/>
    <property type="match status" value="1"/>
</dbReference>
<dbReference type="InterPro" id="IPR050286">
    <property type="entry name" value="G_neg_Bact_CarbUptk_Porin"/>
</dbReference>
<dbReference type="InterPro" id="IPR023738">
    <property type="entry name" value="Maltoporin"/>
</dbReference>
<dbReference type="InterPro" id="IPR003192">
    <property type="entry name" value="Porin_LamB"/>
</dbReference>
<dbReference type="InterPro" id="IPR036998">
    <property type="entry name" value="Porin_LamB_sf"/>
</dbReference>
<dbReference type="NCBIfam" id="NF006860">
    <property type="entry name" value="PRK09360.1"/>
    <property type="match status" value="1"/>
</dbReference>
<dbReference type="PANTHER" id="PTHR38762">
    <property type="entry name" value="CRYPTIC OUTER MEMBRANE PORIN BGLH-RELATED"/>
    <property type="match status" value="1"/>
</dbReference>
<dbReference type="PANTHER" id="PTHR38762:SF1">
    <property type="entry name" value="CRYPTIC OUTER MEMBRANE PORIN BGLH-RELATED"/>
    <property type="match status" value="1"/>
</dbReference>
<dbReference type="Pfam" id="PF02264">
    <property type="entry name" value="LamB"/>
    <property type="match status" value="1"/>
</dbReference>
<dbReference type="SUPFAM" id="SSF56935">
    <property type="entry name" value="Porins"/>
    <property type="match status" value="1"/>
</dbReference>
<gene>
    <name evidence="1" type="primary">lamB1</name>
    <name type="ordered locus">YPTB3642</name>
</gene>
<feature type="signal peptide" evidence="1">
    <location>
        <begin position="1"/>
        <end position="24"/>
    </location>
</feature>
<feature type="chain" id="PRO_0000228858" description="Maltoporin 1">
    <location>
        <begin position="25"/>
        <end position="423"/>
    </location>
</feature>
<feature type="site" description="Greasy slide, important in sugar transport" evidence="1">
    <location>
        <position position="30"/>
    </location>
</feature>
<feature type="site" description="Greasy slide, important in sugar transport" evidence="1">
    <location>
        <position position="65"/>
    </location>
</feature>
<feature type="site" description="Greasy slide, important in sugar transport" evidence="1">
    <location>
        <position position="98"/>
    </location>
</feature>
<feature type="site" description="Important in sugar transport" evidence="1">
    <location>
        <position position="142"/>
    </location>
</feature>
<feature type="site" description="Greasy slide, important in sugar transport" evidence="1">
    <location>
        <position position="250"/>
    </location>
</feature>
<feature type="site" description="Greasy slide, important in sugar transport" evidence="1">
    <location>
        <position position="370"/>
    </location>
</feature>
<feature type="site" description="Greasy slide, important in sugar transport" evidence="1">
    <location>
        <position position="422"/>
    </location>
</feature>
<reference key="1">
    <citation type="journal article" date="2004" name="Proc. Natl. Acad. Sci. U.S.A.">
        <title>Insights into the evolution of Yersinia pestis through whole-genome comparison with Yersinia pseudotuberculosis.</title>
        <authorList>
            <person name="Chain P.S.G."/>
            <person name="Carniel E."/>
            <person name="Larimer F.W."/>
            <person name="Lamerdin J."/>
            <person name="Stoutland P.O."/>
            <person name="Regala W.M."/>
            <person name="Georgescu A.M."/>
            <person name="Vergez L.M."/>
            <person name="Land M.L."/>
            <person name="Motin V.L."/>
            <person name="Brubaker R.R."/>
            <person name="Fowler J."/>
            <person name="Hinnebusch J."/>
            <person name="Marceau M."/>
            <person name="Medigue C."/>
            <person name="Simonet M."/>
            <person name="Chenal-Francisque V."/>
            <person name="Souza B."/>
            <person name="Dacheux D."/>
            <person name="Elliott J.M."/>
            <person name="Derbise A."/>
            <person name="Hauser L.J."/>
            <person name="Garcia E."/>
        </authorList>
    </citation>
    <scope>NUCLEOTIDE SEQUENCE [LARGE SCALE GENOMIC DNA]</scope>
    <source>
        <strain>IP32953</strain>
    </source>
</reference>